<comment type="function">
    <text evidence="1">Catalyzes the attachment of tryptophan to tRNA(Trp).</text>
</comment>
<comment type="catalytic activity">
    <reaction evidence="1">
        <text>tRNA(Trp) + L-tryptophan + ATP = L-tryptophyl-tRNA(Trp) + AMP + diphosphate + H(+)</text>
        <dbReference type="Rhea" id="RHEA:24080"/>
        <dbReference type="Rhea" id="RHEA-COMP:9671"/>
        <dbReference type="Rhea" id="RHEA-COMP:9705"/>
        <dbReference type="ChEBI" id="CHEBI:15378"/>
        <dbReference type="ChEBI" id="CHEBI:30616"/>
        <dbReference type="ChEBI" id="CHEBI:33019"/>
        <dbReference type="ChEBI" id="CHEBI:57912"/>
        <dbReference type="ChEBI" id="CHEBI:78442"/>
        <dbReference type="ChEBI" id="CHEBI:78535"/>
        <dbReference type="ChEBI" id="CHEBI:456215"/>
        <dbReference type="EC" id="6.1.1.2"/>
    </reaction>
</comment>
<comment type="subunit">
    <text evidence="1">Homodimer.</text>
</comment>
<comment type="subcellular location">
    <subcellularLocation>
        <location evidence="1">Cytoplasm</location>
    </subcellularLocation>
</comment>
<comment type="similarity">
    <text evidence="1">Belongs to the class-I aminoacyl-tRNA synthetase family.</text>
</comment>
<dbReference type="EC" id="6.1.1.2" evidence="1"/>
<dbReference type="EMBL" id="AE013218">
    <property type="protein sequence ID" value="AAM68060.1"/>
    <property type="molecule type" value="Genomic_DNA"/>
</dbReference>
<dbReference type="RefSeq" id="WP_011054026.1">
    <property type="nucleotide sequence ID" value="NC_004061.1"/>
</dbReference>
<dbReference type="SMR" id="Q8K941"/>
<dbReference type="STRING" id="198804.BUsg_517"/>
<dbReference type="GeneID" id="93003992"/>
<dbReference type="KEGG" id="bas:BUsg_517"/>
<dbReference type="eggNOG" id="COG0180">
    <property type="taxonomic scope" value="Bacteria"/>
</dbReference>
<dbReference type="HOGENOM" id="CLU_029244_1_1_6"/>
<dbReference type="Proteomes" id="UP000000416">
    <property type="component" value="Chromosome"/>
</dbReference>
<dbReference type="GO" id="GO:0005829">
    <property type="term" value="C:cytosol"/>
    <property type="evidence" value="ECO:0007669"/>
    <property type="project" value="TreeGrafter"/>
</dbReference>
<dbReference type="GO" id="GO:0005524">
    <property type="term" value="F:ATP binding"/>
    <property type="evidence" value="ECO:0007669"/>
    <property type="project" value="UniProtKB-UniRule"/>
</dbReference>
<dbReference type="GO" id="GO:0004830">
    <property type="term" value="F:tryptophan-tRNA ligase activity"/>
    <property type="evidence" value="ECO:0007669"/>
    <property type="project" value="UniProtKB-UniRule"/>
</dbReference>
<dbReference type="GO" id="GO:0006436">
    <property type="term" value="P:tryptophanyl-tRNA aminoacylation"/>
    <property type="evidence" value="ECO:0007669"/>
    <property type="project" value="UniProtKB-UniRule"/>
</dbReference>
<dbReference type="CDD" id="cd00806">
    <property type="entry name" value="TrpRS_core"/>
    <property type="match status" value="1"/>
</dbReference>
<dbReference type="FunFam" id="1.10.240.10:FF:000002">
    <property type="entry name" value="Tryptophan--tRNA ligase"/>
    <property type="match status" value="1"/>
</dbReference>
<dbReference type="Gene3D" id="3.40.50.620">
    <property type="entry name" value="HUPs"/>
    <property type="match status" value="1"/>
</dbReference>
<dbReference type="Gene3D" id="1.10.240.10">
    <property type="entry name" value="Tyrosyl-Transfer RNA Synthetase"/>
    <property type="match status" value="1"/>
</dbReference>
<dbReference type="HAMAP" id="MF_00140_B">
    <property type="entry name" value="Trp_tRNA_synth_B"/>
    <property type="match status" value="1"/>
</dbReference>
<dbReference type="InterPro" id="IPR001412">
    <property type="entry name" value="aa-tRNA-synth_I_CS"/>
</dbReference>
<dbReference type="InterPro" id="IPR002305">
    <property type="entry name" value="aa-tRNA-synth_Ic"/>
</dbReference>
<dbReference type="InterPro" id="IPR014729">
    <property type="entry name" value="Rossmann-like_a/b/a_fold"/>
</dbReference>
<dbReference type="InterPro" id="IPR002306">
    <property type="entry name" value="Trp-tRNA-ligase"/>
</dbReference>
<dbReference type="InterPro" id="IPR024109">
    <property type="entry name" value="Trp-tRNA-ligase_bac-type"/>
</dbReference>
<dbReference type="InterPro" id="IPR050203">
    <property type="entry name" value="Trp-tRNA_synthetase"/>
</dbReference>
<dbReference type="NCBIfam" id="TIGR00233">
    <property type="entry name" value="trpS"/>
    <property type="match status" value="1"/>
</dbReference>
<dbReference type="PANTHER" id="PTHR43766">
    <property type="entry name" value="TRYPTOPHAN--TRNA LIGASE, MITOCHONDRIAL"/>
    <property type="match status" value="1"/>
</dbReference>
<dbReference type="PANTHER" id="PTHR43766:SF1">
    <property type="entry name" value="TRYPTOPHAN--TRNA LIGASE, MITOCHONDRIAL"/>
    <property type="match status" value="1"/>
</dbReference>
<dbReference type="Pfam" id="PF00579">
    <property type="entry name" value="tRNA-synt_1b"/>
    <property type="match status" value="1"/>
</dbReference>
<dbReference type="PRINTS" id="PR01039">
    <property type="entry name" value="TRNASYNTHTRP"/>
</dbReference>
<dbReference type="SUPFAM" id="SSF52374">
    <property type="entry name" value="Nucleotidylyl transferase"/>
    <property type="match status" value="1"/>
</dbReference>
<dbReference type="PROSITE" id="PS00178">
    <property type="entry name" value="AA_TRNA_LIGASE_I"/>
    <property type="match status" value="1"/>
</dbReference>
<organism>
    <name type="scientific">Buchnera aphidicola subsp. Schizaphis graminum (strain Sg)</name>
    <dbReference type="NCBI Taxonomy" id="198804"/>
    <lineage>
        <taxon>Bacteria</taxon>
        <taxon>Pseudomonadati</taxon>
        <taxon>Pseudomonadota</taxon>
        <taxon>Gammaproteobacteria</taxon>
        <taxon>Enterobacterales</taxon>
        <taxon>Erwiniaceae</taxon>
        <taxon>Buchnera</taxon>
    </lineage>
</organism>
<protein>
    <recommendedName>
        <fullName evidence="1">Tryptophan--tRNA ligase</fullName>
        <ecNumber evidence="1">6.1.1.2</ecNumber>
    </recommendedName>
    <alternativeName>
        <fullName evidence="1">Tryptophanyl-tRNA synthetase</fullName>
        <shortName evidence="1">TrpRS</shortName>
    </alternativeName>
</protein>
<evidence type="ECO:0000255" key="1">
    <source>
        <dbReference type="HAMAP-Rule" id="MF_00140"/>
    </source>
</evidence>
<sequence>MINSKPILFSAIQPSGNLTIGNYIGTMRYWSSFQDDYECLYCIADLHSLTTLNKNFSLKKSILDTLALYLACGVNPKKSIIFIQSHVYQHSQLNWILSCFSSFGELSRMTQFKNKRKKEKNDIKNINIGLLNYPVLMSSDILLYQTNLVPVGQDQKQHLELTRNIANRFNFLYGDIFTLPNPLISKNGSKIMSLLDPTKKMSKSDTNKNNVIFLLENISSVFFKIKNAVTDSETPPKIYYDVKRKLGISNLLEILSAITNKEIFILEKEFDGIMYSEFKNIVFDNISKFLHKLQKSYLIYRKDESYLKNIAKEGAIKARLKSEKILKRVFSAVEID</sequence>
<proteinExistence type="inferred from homology"/>
<keyword id="KW-0030">Aminoacyl-tRNA synthetase</keyword>
<keyword id="KW-0067">ATP-binding</keyword>
<keyword id="KW-0963">Cytoplasm</keyword>
<keyword id="KW-0436">Ligase</keyword>
<keyword id="KW-0547">Nucleotide-binding</keyword>
<keyword id="KW-0648">Protein biosynthesis</keyword>
<gene>
    <name evidence="1" type="primary">trpS</name>
    <name type="ordered locus">BUsg_517</name>
</gene>
<accession>Q8K941</accession>
<name>SYW_BUCAP</name>
<reference key="1">
    <citation type="journal article" date="2002" name="Science">
        <title>50 million years of genomic stasis in endosymbiotic bacteria.</title>
        <authorList>
            <person name="Tamas I."/>
            <person name="Klasson L."/>
            <person name="Canbaeck B."/>
            <person name="Naeslund A.K."/>
            <person name="Eriksson A.-S."/>
            <person name="Wernegreen J.J."/>
            <person name="Sandstroem J.P."/>
            <person name="Moran N.A."/>
            <person name="Andersson S.G.E."/>
        </authorList>
    </citation>
    <scope>NUCLEOTIDE SEQUENCE [LARGE SCALE GENOMIC DNA]</scope>
    <source>
        <strain>Sg</strain>
    </source>
</reference>
<feature type="chain" id="PRO_0000136611" description="Tryptophan--tRNA ligase">
    <location>
        <begin position="1"/>
        <end position="336"/>
    </location>
</feature>
<feature type="short sequence motif" description="'HIGH' region" evidence="1">
    <location>
        <begin position="14"/>
        <end position="22"/>
    </location>
</feature>
<feature type="short sequence motif" description="'KMSKS' region" evidence="1">
    <location>
        <begin position="200"/>
        <end position="204"/>
    </location>
</feature>
<feature type="binding site" evidence="1">
    <location>
        <begin position="13"/>
        <end position="15"/>
    </location>
    <ligand>
        <name>ATP</name>
        <dbReference type="ChEBI" id="CHEBI:30616"/>
    </ligand>
</feature>
<feature type="binding site" evidence="1">
    <location>
        <begin position="21"/>
        <end position="22"/>
    </location>
    <ligand>
        <name>ATP</name>
        <dbReference type="ChEBI" id="CHEBI:30616"/>
    </ligand>
</feature>
<feature type="binding site" evidence="1">
    <location>
        <position position="140"/>
    </location>
    <ligand>
        <name>L-tryptophan</name>
        <dbReference type="ChEBI" id="CHEBI:57912"/>
    </ligand>
</feature>
<feature type="binding site" evidence="1">
    <location>
        <begin position="152"/>
        <end position="154"/>
    </location>
    <ligand>
        <name>ATP</name>
        <dbReference type="ChEBI" id="CHEBI:30616"/>
    </ligand>
</feature>
<feature type="binding site" evidence="1">
    <location>
        <position position="191"/>
    </location>
    <ligand>
        <name>ATP</name>
        <dbReference type="ChEBI" id="CHEBI:30616"/>
    </ligand>
</feature>
<feature type="binding site" evidence="1">
    <location>
        <begin position="200"/>
        <end position="204"/>
    </location>
    <ligand>
        <name>ATP</name>
        <dbReference type="ChEBI" id="CHEBI:30616"/>
    </ligand>
</feature>